<proteinExistence type="evidence at protein level"/>
<accession>A0A1W6IZJ5</accession>
<protein>
    <recommendedName>
        <fullName evidence="12">Cytoadherence-linked asexual protein 3.1</fullName>
        <shortName evidence="8 9 10 11">CLAG3</shortName>
        <shortName evidence="10">RhopH1</shortName>
    </recommendedName>
</protein>
<organism evidence="13">
    <name type="scientific">Plasmodium falciparum</name>
    <dbReference type="NCBI Taxonomy" id="5833"/>
    <lineage>
        <taxon>Eukaryota</taxon>
        <taxon>Sar</taxon>
        <taxon>Alveolata</taxon>
        <taxon>Apicomplexa</taxon>
        <taxon>Aconoidasida</taxon>
        <taxon>Haemosporida</taxon>
        <taxon>Plasmodiidae</taxon>
        <taxon>Plasmodium</taxon>
        <taxon>Plasmodium (Laverania)</taxon>
    </lineage>
</organism>
<dbReference type="EMBL" id="KY092485">
    <property type="protein sequence ID" value="ARM59352.1"/>
    <property type="molecule type" value="Genomic_DNA"/>
</dbReference>
<dbReference type="SMR" id="A0A1W6IZJ5"/>
<dbReference type="VEuPathDB" id="PlasmoDB:PF3D7_0302500"/>
<dbReference type="VEuPathDB" id="PlasmoDB:Pf7G8-2_000072000"/>
<dbReference type="VEuPathDB" id="PlasmoDB:Pf7G8_030008300"/>
<dbReference type="VEuPathDB" id="PlasmoDB:PfCD01_030007900"/>
<dbReference type="VEuPathDB" id="PlasmoDB:PfDd2_030007500"/>
<dbReference type="VEuPathDB" id="PlasmoDB:PfGA01_030009100"/>
<dbReference type="VEuPathDB" id="PlasmoDB:PfGB4_030008100"/>
<dbReference type="VEuPathDB" id="PlasmoDB:PfGN01_030008100"/>
<dbReference type="VEuPathDB" id="PlasmoDB:PfHB3_030006300"/>
<dbReference type="VEuPathDB" id="PlasmoDB:PfIT_030007300"/>
<dbReference type="VEuPathDB" id="PlasmoDB:PfKE01_030006900"/>
<dbReference type="VEuPathDB" id="PlasmoDB:PfKH01_030007400"/>
<dbReference type="VEuPathDB" id="PlasmoDB:PfKH02_030007800"/>
<dbReference type="VEuPathDB" id="PlasmoDB:PfML01_000109900"/>
<dbReference type="VEuPathDB" id="PlasmoDB:PfNF135_030007600"/>
<dbReference type="VEuPathDB" id="PlasmoDB:PfNF166_030005500"/>
<dbReference type="VEuPathDB" id="PlasmoDB:PfNF54_030007600"/>
<dbReference type="VEuPathDB" id="PlasmoDB:PfSD01_030007600"/>
<dbReference type="VEuPathDB" id="PlasmoDB:PfSN01_030008200"/>
<dbReference type="VEuPathDB" id="PlasmoDB:PfTG01_000027400"/>
<dbReference type="GO" id="GO:0031410">
    <property type="term" value="C:cytoplasmic vesicle"/>
    <property type="evidence" value="ECO:0007669"/>
    <property type="project" value="UniProtKB-KW"/>
</dbReference>
<dbReference type="GO" id="GO:0030430">
    <property type="term" value="C:host cell cytoplasm"/>
    <property type="evidence" value="ECO:0007669"/>
    <property type="project" value="UniProtKB-SubCell"/>
</dbReference>
<dbReference type="GO" id="GO:0020002">
    <property type="term" value="C:host cell plasma membrane"/>
    <property type="evidence" value="ECO:0007669"/>
    <property type="project" value="UniProtKB-SubCell"/>
</dbReference>
<dbReference type="GO" id="GO:0016020">
    <property type="term" value="C:membrane"/>
    <property type="evidence" value="ECO:0007669"/>
    <property type="project" value="UniProtKB-KW"/>
</dbReference>
<dbReference type="GO" id="GO:0020008">
    <property type="term" value="C:rhoptry"/>
    <property type="evidence" value="ECO:0007669"/>
    <property type="project" value="UniProtKB-SubCell"/>
</dbReference>
<dbReference type="GO" id="GO:0020035">
    <property type="term" value="P:adhesion of symbiont to microvasculature"/>
    <property type="evidence" value="ECO:0007669"/>
    <property type="project" value="InterPro"/>
</dbReference>
<dbReference type="InterPro" id="IPR005553">
    <property type="entry name" value="CLAG"/>
</dbReference>
<dbReference type="PANTHER" id="PTHR31802">
    <property type="entry name" value="32 KDA HEAT SHOCK PROTEIN-RELATED"/>
    <property type="match status" value="1"/>
</dbReference>
<dbReference type="PANTHER" id="PTHR31802:SF39">
    <property type="entry name" value="CHROMOSOME UNDETERMINED SCAFFOLD_55, WHOLE GENOME SHOTGUN SEQUENCE"/>
    <property type="match status" value="1"/>
</dbReference>
<dbReference type="Pfam" id="PF03805">
    <property type="entry name" value="CLAG"/>
    <property type="match status" value="1"/>
</dbReference>
<name>RCH1A_PLAFA</name>
<feature type="signal peptide" evidence="2">
    <location>
        <begin position="1"/>
        <end position="24"/>
    </location>
</feature>
<feature type="chain" id="PRO_5012687220" description="Cytoadherence-linked asexual protein 3.1" evidence="2">
    <location>
        <begin position="25"/>
        <end position="1417"/>
    </location>
</feature>
<feature type="transmembrane region" description="Helical" evidence="2">
    <location>
        <begin position="1204"/>
        <end position="1224"/>
    </location>
</feature>
<feature type="region of interest" description="Disordered" evidence="3">
    <location>
        <begin position="1383"/>
        <end position="1417"/>
    </location>
</feature>
<feature type="compositionally biased region" description="Acidic residues" evidence="3">
    <location>
        <begin position="1394"/>
        <end position="1411"/>
    </location>
</feature>
<feature type="disulfide bond" evidence="1">
    <location>
        <begin position="333"/>
        <end position="361"/>
    </location>
</feature>
<feature type="disulfide bond" evidence="1">
    <location>
        <begin position="407"/>
        <end position="413"/>
    </location>
</feature>
<feature type="disulfide bond" evidence="1">
    <location>
        <begin position="517"/>
        <end position="545"/>
    </location>
</feature>
<feature type="disulfide bond" evidence="1">
    <location>
        <begin position="521"/>
        <end position="542"/>
    </location>
</feature>
<sequence>MVSFFKTPIFILIIFLYLNEKVICSINENQNENDTISQNVNQHENINQNVNDNDNIEQLKSMIGNDELHKNLTILEKLILESLEKDKLKYPLLKQGTEQLIDISKFNKKNITDADDETYIIPTVQSSFHDIVKYEHLIKEQSIEIYNSDISDKIKKKIFIVRTLKTIKLMLIPLNSYKQNNDLKSALEELNNVFTNKEAQKESSPIGDHGTFFRKLLTHVRTIKENEDIENKGETLILGDNKIDVMNSNDFFFTTNSNVKFMENLDDITNQYGLGLINHLGPHLIALGHFTVLKLALKNYKNYFEAKSIKFFSWQKILEFSMSDRFKVLDMMCNHESVYYSEKKRRKTYLKVDRSSTSMECNILEYLLHYFNKYQLEIIKTTQDTDFDLHGMMEHKYIKDYFFSFMCNDPKECIIYHTNQFKKEANEENTFPEQEEPNREISAYNLYLNYYYFMKRYSSYGVKKTLYVHLLNLTGLLNYDTRSYVTSLYLPGYYNAVEMSFTEEKEFSKLFESLIQCIEKCHSDQARQISKDSNLLNDITKCDLCKGAFLYSNMKFDEVPSMLQKFYLYLTKGLKIQKVSSLIKTLDIYQDYSNYLSHDINWYTFLFLFRLTSFKEISKKNVAEAMYLNIKDEDTFNKTVVTNYWYPSPIKKYYTLYVRKHIPNNLVDELEKLMKSGTLEKMKKSLTFLVHVNSFLQLDFFHQLNEPPLGLPRSYPLSLVLEHKFKEWMDSSPAGFYFSNYQNPYVRKDLHDKVLSQKFEPPKMNQWNKVLKSLIECAYDMYFEQRHVKNLYKYHNIYNINNKLMLMRDSIDLYKTHFDDVLFFADIFNMRKYMTATPVYKKVKDRVYHTLHSITGNSVNFYKYGIIYGFKVNKEILKEVVDELYSIYNFNTDIFTDTSFLQTVYLLFRRIEETYRTQRRDDKISVNNVFFMNVVNNYSKLNKEEREIEIHNSMASRYYAKTMFAAFQMLFSTMLSNNVDNLDKAYGLSENIQVATSTSAFLTFAYVYNGSIMDSVTNSLLPPYAKKPITQLKYGKTFVFSNYFMLASKMYDMLNYKNLSLLCEYQAVASANFYSAKKVGQFIGRKFLPITTYFLVMRISWTHAFTTGQHLICAFDPKGCTADCKNSAPCYKSPESFFFTHALAAEASKYLFFYFFTNLYLDAYKSFPGGFGPAIKEQTQHVQEQTYERKPSVHSFNRNFFMELANGFMYAFCFFAISQMYAYFENINFYITSNFRFLDRYYGVFNKYFINYARIKLKEITSDLLIKYEREAYLSMKKYGYLGEVIAARLSPKDKIMNYVHETNDDVMSNLRRYDMENAFKNKMSTYVDDFAFFDDCGKNEQFLNERCDYCPVIEEVEETQLFTTTGDKNTNKTTEIKKQTSTYIDTEKMNEADSADSDDEKDSDTPDDELMISRFH</sequence>
<comment type="function">
    <text evidence="4 7">Participates in the formation of new permeability pathways in Plasmodium-infected erythrocytes enabling the uptake of nutrients from the blood plasma.</text>
</comment>
<comment type="subunit">
    <text evidence="1 5 7">Self-associates (PubMed:27299521, PubMed:29739907). Component of the RhopH complex (PubMed:27299521, PubMed:29739907). RhopH complex is at least composed of CLAG3.1/CLAG3.2, RhopH2 and RhopH3 with a 1:1:1 subunit stoichiometry (By similarity). CLAG3.1/CLAG3.2 mediates subunit association through independent contacts with RhopH2 and RhopH3, which do not directly interact with one another (By similarity). Interacts with RhopH2 (PubMed:27299521). Interacts with RhopH3 (By similarity).</text>
</comment>
<comment type="subcellular location">
    <subcellularLocation>
        <location evidence="4 5 7">Host cell membrane</location>
        <topology evidence="2">Single-pass membrane protein</topology>
    </subcellularLocation>
    <subcellularLocation>
        <location evidence="4 5 7">Host cell membrane</location>
        <topology evidence="4">Peripheral membrane protein</topology>
        <orientation evidence="4">Cytoplasmic side</orientation>
    </subcellularLocation>
    <subcellularLocation>
        <location evidence="4 7">Host cytoplasm</location>
    </subcellularLocation>
    <subcellularLocation>
        <location evidence="4 7">Cytoplasmic vesicle</location>
        <location evidence="4 7">Secretory vesicle</location>
        <location evidence="4 7">Rhoptry</location>
    </subcellularLocation>
</comment>
<comment type="developmental stage">
    <text evidence="7">Expressed in merozoites (at protein level) (PubMed:29739907). Expressed in trophozoites (at protein level) (PubMed:29739907). Expressed in schizonts (at protein level) (PubMed:29739907).</text>
</comment>
<comment type="miscellaneous">
    <text evidence="4 6 7">Many Plasmodium falciparum strains have two highly similar paralogous genes, CLAG3.1 and CLAG3.2, that are mutually exclusively expressed (PubMed:28419281). CLAG3.1 is preferentially expressed in cultured parasites (PubMed:28419281). Analysis of blood specimens from 20 Plasmodium falciparum-infected symptomatic patients indicates that parasites predominantly express CLAG3.2 in natural malaria infections (PubMed:28419281). CLAG3.1/CLAG3.2 expression patterns can change under different environment conditions (PubMed:28419281). In Dd2 strain, CLAG3.1 activity is inhibited by ISPA-28 compound (PubMed:21620134, PubMed:29739907).</text>
</comment>
<keyword id="KW-0968">Cytoplasmic vesicle</keyword>
<keyword id="KW-1015">Disulfide bond</keyword>
<keyword id="KW-1032">Host cell membrane</keyword>
<keyword id="KW-1035">Host cytoplasm</keyword>
<keyword id="KW-1043">Host membrane</keyword>
<keyword id="KW-0472">Membrane</keyword>
<keyword id="KW-0732">Signal</keyword>
<keyword id="KW-0812">Transmembrane</keyword>
<keyword id="KW-1133">Transmembrane helix</keyword>
<keyword id="KW-0813">Transport</keyword>
<reference evidence="13" key="1">
    <citation type="journal article" date="2017" name="J. Infect. Dis.">
        <title>Expression of the Plasmodium falciparum Clonally Variant clag3 Genes in Human Infections.</title>
        <authorList>
            <person name="Mira-Martinez S."/>
            <person name="van Schuppen E."/>
            <person name="Amambua-Ngwa A."/>
            <person name="Bottieau E."/>
            <person name="Affara M."/>
            <person name="Van Esbroeck M."/>
            <person name="Vlieghe E."/>
            <person name="Guetens P."/>
            <person name="Rovira-Graells N."/>
            <person name="Gomez-Perez G.P."/>
            <person name="Alonso P.L."/>
            <person name="D'Alessandro U."/>
            <person name="Rosanas-Urgell A."/>
            <person name="Cortes A."/>
        </authorList>
    </citation>
    <scope>NUCLEOTIDE SEQUENCE [GENOMIC DNA]</scope>
    <source>
        <strain evidence="13">P04-ITM</strain>
    </source>
</reference>
<reference evidence="12" key="2">
    <citation type="journal article" date="2011" name="Cell">
        <title>Malaria parasite clag3 genes determine channel-mediated nutrient uptake by infected red blood cells.</title>
        <authorList>
            <person name="Nguitragool W."/>
            <person name="Bokhari A.A."/>
            <person name="Pillai A.D."/>
            <person name="Rayavara K."/>
            <person name="Sharma P."/>
            <person name="Turpin B."/>
            <person name="Aravind L."/>
            <person name="Desai S.A."/>
        </authorList>
    </citation>
    <scope>FUNCTION</scope>
    <scope>SUBCELLULAR LOCATION</scope>
    <source>
        <strain evidence="8">Dd2</strain>
        <strain evidence="8">HB3</strain>
    </source>
</reference>
<reference evidence="12" key="3">
    <citation type="journal article" date="2016" name="PLoS ONE">
        <title>Malaria Parasite CLAG3, a Protein Linked to Nutrient Channels, Participates in High Molecular Weight Membrane-Associated Complexes in the Infected Erythrocyte.</title>
        <authorList>
            <person name="Zainabadi K."/>
        </authorList>
    </citation>
    <scope>MASS SPECTROMETRY</scope>
    <scope>SUBUNIT</scope>
    <scope>IDENTIFICATION IN RHOPH COMPLEX</scope>
    <scope>INTERACTION WITH RHOPH2</scope>
    <scope>SUBCELLULAR LOCATION</scope>
    <source>
        <strain evidence="9">HB3</strain>
    </source>
</reference>
<reference evidence="12" key="4">
    <citation type="journal article" date="2018" name="MBio">
        <title>CLAG3 Self-Associates in Malaria Parasites and Quantitatively Determines Nutrient Uptake Channels at the Host Membrane.</title>
        <authorList>
            <person name="Gupta A."/>
            <person name="Balabaskaran-Nina P."/>
            <person name="Nguitragool W."/>
            <person name="Saggu G.S."/>
            <person name="Schureck M.A."/>
            <person name="Desai S.A."/>
        </authorList>
    </citation>
    <scope>FUNCTION</scope>
    <scope>SUBUNIT</scope>
    <scope>IDENTIFICATION IN RHOPH COMPLEX</scope>
    <scope>SUBCELLULAR LOCATION</scope>
    <scope>DEVELOPMENTAL STAGE</scope>
    <source>
        <strain evidence="11">3D7</strain>
        <strain evidence="11">Dd2</strain>
        <strain evidence="11">KC5</strain>
    </source>
</reference>
<evidence type="ECO:0000250" key="1">
    <source>
        <dbReference type="UniProtKB" id="A0A2I0BTS3"/>
    </source>
</evidence>
<evidence type="ECO:0000255" key="2"/>
<evidence type="ECO:0000256" key="3">
    <source>
        <dbReference type="SAM" id="MobiDB-lite"/>
    </source>
</evidence>
<evidence type="ECO:0000269" key="4">
    <source>
    </source>
</evidence>
<evidence type="ECO:0000269" key="5">
    <source>
    </source>
</evidence>
<evidence type="ECO:0000269" key="6">
    <source>
    </source>
</evidence>
<evidence type="ECO:0000269" key="7">
    <source>
    </source>
</evidence>
<evidence type="ECO:0000303" key="8">
    <source>
    </source>
</evidence>
<evidence type="ECO:0000303" key="9">
    <source>
    </source>
</evidence>
<evidence type="ECO:0000303" key="10">
    <source>
    </source>
</evidence>
<evidence type="ECO:0000303" key="11">
    <source>
    </source>
</evidence>
<evidence type="ECO:0000305" key="12"/>
<evidence type="ECO:0000312" key="13">
    <source>
        <dbReference type="EMBL" id="ARM59352.1"/>
    </source>
</evidence>
<gene>
    <name evidence="10" type="primary">CLAG3.1</name>
</gene>